<accession>Q7VDN7</accession>
<organism>
    <name type="scientific">Prochlorococcus marinus (strain SARG / CCMP1375 / SS120)</name>
    <dbReference type="NCBI Taxonomy" id="167539"/>
    <lineage>
        <taxon>Bacteria</taxon>
        <taxon>Bacillati</taxon>
        <taxon>Cyanobacteriota</taxon>
        <taxon>Cyanophyceae</taxon>
        <taxon>Synechococcales</taxon>
        <taxon>Prochlorococcaceae</taxon>
        <taxon>Prochlorococcus</taxon>
    </lineage>
</organism>
<name>PSBJ_PROMA</name>
<comment type="function">
    <text evidence="1">One of the components of the core complex of photosystem II (PSII). PSII is a light-driven water:plastoquinone oxidoreductase that uses light energy to abstract electrons from H(2)O, generating O(2) and a proton gradient subsequently used for ATP formation. It consists of a core antenna complex that captures photons, and an electron transfer chain that converts photonic excitation into a charge separation.</text>
</comment>
<comment type="subunit">
    <text evidence="3">PSII is composed of 1 copy each of membrane proteins PsbA, PsbB, PsbC, PsbD, PsbE, PsbF, PsbH, PsbI, PsbJ, PsbK, PsbL, PsbM, PsbT, PsbX, PsbY, Psb30/Ycf12, peripheral proteins PsbO, CyanoQ (PsbQ), PsbU, PsbV and a large number of cofactors. It forms dimeric complexes.</text>
</comment>
<comment type="subcellular location">
    <subcellularLocation>
        <location evidence="1">Cellular thylakoid membrane</location>
        <topology evidence="1">Single-pass membrane protein</topology>
    </subcellularLocation>
</comment>
<comment type="similarity">
    <text evidence="1">Belongs to the PsbJ family.</text>
</comment>
<reference key="1">
    <citation type="journal article" date="2003" name="Proc. Natl. Acad. Sci. U.S.A.">
        <title>Genome sequence of the cyanobacterium Prochlorococcus marinus SS120, a nearly minimal oxyphototrophic genome.</title>
        <authorList>
            <person name="Dufresne A."/>
            <person name="Salanoubat M."/>
            <person name="Partensky F."/>
            <person name="Artiguenave F."/>
            <person name="Axmann I.M."/>
            <person name="Barbe V."/>
            <person name="Duprat S."/>
            <person name="Galperin M.Y."/>
            <person name="Koonin E.V."/>
            <person name="Le Gall F."/>
            <person name="Makarova K.S."/>
            <person name="Ostrowski M."/>
            <person name="Oztas S."/>
            <person name="Robert C."/>
            <person name="Rogozin I.B."/>
            <person name="Scanlan D.J."/>
            <person name="Tandeau de Marsac N."/>
            <person name="Weissenbach J."/>
            <person name="Wincker P."/>
            <person name="Wolf Y.I."/>
            <person name="Hess W.R."/>
        </authorList>
    </citation>
    <scope>NUCLEOTIDE SEQUENCE [LARGE SCALE GENOMIC DNA]</scope>
    <source>
        <strain>SARG / CCMP1375 / SS120</strain>
    </source>
</reference>
<keyword id="KW-0472">Membrane</keyword>
<keyword id="KW-0602">Photosynthesis</keyword>
<keyword id="KW-0604">Photosystem II</keyword>
<keyword id="KW-0674">Reaction center</keyword>
<keyword id="KW-1185">Reference proteome</keyword>
<keyword id="KW-0793">Thylakoid</keyword>
<keyword id="KW-0812">Transmembrane</keyword>
<keyword id="KW-1133">Transmembrane helix</keyword>
<evidence type="ECO:0000255" key="1">
    <source>
        <dbReference type="HAMAP-Rule" id="MF_01305"/>
    </source>
</evidence>
<evidence type="ECO:0000256" key="2">
    <source>
        <dbReference type="SAM" id="MobiDB-lite"/>
    </source>
</evidence>
<evidence type="ECO:0000305" key="3"/>
<feature type="chain" id="PRO_0000292225" description="Photosystem II reaction center protein J">
    <location>
        <begin position="1"/>
        <end position="65"/>
    </location>
</feature>
<feature type="transmembrane region" description="Helical" evidence="1">
    <location>
        <begin position="36"/>
        <end position="56"/>
    </location>
</feature>
<feature type="region of interest" description="Disordered" evidence="2">
    <location>
        <begin position="1"/>
        <end position="21"/>
    </location>
</feature>
<feature type="compositionally biased region" description="Basic and acidic residues" evidence="2">
    <location>
        <begin position="1"/>
        <end position="18"/>
    </location>
</feature>
<protein>
    <recommendedName>
        <fullName evidence="1">Photosystem II reaction center protein J</fullName>
        <shortName evidence="1">PSII-J</shortName>
    </recommendedName>
</protein>
<dbReference type="EMBL" id="AE017126">
    <property type="protein sequence ID" value="AAP99377.1"/>
    <property type="molecule type" value="Genomic_DNA"/>
</dbReference>
<dbReference type="RefSeq" id="NP_874725.1">
    <property type="nucleotide sequence ID" value="NC_005042.1"/>
</dbReference>
<dbReference type="RefSeq" id="WP_011124486.1">
    <property type="nucleotide sequence ID" value="NC_005042.1"/>
</dbReference>
<dbReference type="SMR" id="Q7VDN7"/>
<dbReference type="STRING" id="167539.Pro_0331"/>
<dbReference type="EnsemblBacteria" id="AAP99377">
    <property type="protein sequence ID" value="AAP99377"/>
    <property type="gene ID" value="Pro_0331"/>
</dbReference>
<dbReference type="KEGG" id="pma:Pro_0331"/>
<dbReference type="PATRIC" id="fig|167539.5.peg.340"/>
<dbReference type="eggNOG" id="ENOG5030SSF">
    <property type="taxonomic scope" value="Bacteria"/>
</dbReference>
<dbReference type="HOGENOM" id="CLU_2829784_0_0_3"/>
<dbReference type="OrthoDB" id="466474at2"/>
<dbReference type="Proteomes" id="UP000001420">
    <property type="component" value="Chromosome"/>
</dbReference>
<dbReference type="GO" id="GO:0009539">
    <property type="term" value="C:photosystem II reaction center"/>
    <property type="evidence" value="ECO:0007669"/>
    <property type="project" value="InterPro"/>
</dbReference>
<dbReference type="GO" id="GO:0031676">
    <property type="term" value="C:plasma membrane-derived thylakoid membrane"/>
    <property type="evidence" value="ECO:0007669"/>
    <property type="project" value="UniProtKB-SubCell"/>
</dbReference>
<dbReference type="GO" id="GO:0015979">
    <property type="term" value="P:photosynthesis"/>
    <property type="evidence" value="ECO:0007669"/>
    <property type="project" value="UniProtKB-UniRule"/>
</dbReference>
<dbReference type="Gene3D" id="6.10.250.2070">
    <property type="match status" value="1"/>
</dbReference>
<dbReference type="HAMAP" id="MF_01305">
    <property type="entry name" value="PSII_PsbJ"/>
    <property type="match status" value="1"/>
</dbReference>
<dbReference type="InterPro" id="IPR002682">
    <property type="entry name" value="PSII_PsbJ"/>
</dbReference>
<dbReference type="InterPro" id="IPR037267">
    <property type="entry name" value="PSII_PsbJ_sf"/>
</dbReference>
<dbReference type="NCBIfam" id="NF002722">
    <property type="entry name" value="PRK02565.1"/>
    <property type="match status" value="1"/>
</dbReference>
<dbReference type="PANTHER" id="PTHR34812">
    <property type="entry name" value="PHOTOSYSTEM II REACTION CENTER PROTEIN J"/>
    <property type="match status" value="1"/>
</dbReference>
<dbReference type="PANTHER" id="PTHR34812:SF3">
    <property type="entry name" value="PHOTOSYSTEM II REACTION CENTER PROTEIN J"/>
    <property type="match status" value="1"/>
</dbReference>
<dbReference type="Pfam" id="PF01788">
    <property type="entry name" value="PsbJ"/>
    <property type="match status" value="1"/>
</dbReference>
<dbReference type="SUPFAM" id="SSF161021">
    <property type="entry name" value="Photosystem II reaction center protein J, PsbJ"/>
    <property type="match status" value="1"/>
</dbReference>
<gene>
    <name evidence="1" type="primary">psbJ</name>
    <name type="ordered locus">Pro_0331</name>
</gene>
<sequence length="65" mass="7022">MSSKLKGPDGRLPDRLPDGRPAVSWERRWTEGQLPLWLVATAGGIAVIFVLGIFFYGSYTGVGSA</sequence>
<proteinExistence type="inferred from homology"/>